<gene>
    <name evidence="17" type="primary">EPB42</name>
    <name type="synonym">E42P</name>
</gene>
<proteinExistence type="evidence at protein level"/>
<name>EPB42_HUMAN</name>
<protein>
    <recommendedName>
        <fullName evidence="15">Protein 4.2</fullName>
        <shortName evidence="15">P4.2</shortName>
    </recommendedName>
    <alternativeName>
        <fullName evidence="17">Erythrocyte membrane protein band 4.2</fullName>
        <shortName evidence="11">Erythrocyte protein 4.2</shortName>
    </alternativeName>
</protein>
<evidence type="ECO:0000250" key="1"/>
<evidence type="ECO:0000269" key="2">
    <source>
    </source>
</evidence>
<evidence type="ECO:0000269" key="3">
    <source>
    </source>
</evidence>
<evidence type="ECO:0000269" key="4">
    <source>
    </source>
</evidence>
<evidence type="ECO:0000269" key="5">
    <source>
    </source>
</evidence>
<evidence type="ECO:0000269" key="6">
    <source>
    </source>
</evidence>
<evidence type="ECO:0000269" key="7">
    <source>
    </source>
</evidence>
<evidence type="ECO:0000269" key="8">
    <source>
    </source>
</evidence>
<evidence type="ECO:0000269" key="9">
    <source>
    </source>
</evidence>
<evidence type="ECO:0000269" key="10">
    <source>
    </source>
</evidence>
<evidence type="ECO:0000303" key="11">
    <source>
    </source>
</evidence>
<evidence type="ECO:0000303" key="12">
    <source>
    </source>
</evidence>
<evidence type="ECO:0000303" key="13">
    <source>
    </source>
</evidence>
<evidence type="ECO:0000303" key="14">
    <source>
    </source>
</evidence>
<evidence type="ECO:0000305" key="15"/>
<evidence type="ECO:0000305" key="16">
    <source>
    </source>
</evidence>
<evidence type="ECO:0000312" key="17">
    <source>
        <dbReference type="HGNC" id="HGNC:3381"/>
    </source>
</evidence>
<evidence type="ECO:0007744" key="18">
    <source>
        <dbReference type="PDB" id="7UZS"/>
    </source>
</evidence>
<evidence type="ECO:0007744" key="19">
    <source>
        <dbReference type="PDB" id="7V0K"/>
    </source>
</evidence>
<evidence type="ECO:0007744" key="20">
    <source>
        <dbReference type="PDB" id="7V0Q"/>
    </source>
</evidence>
<evidence type="ECO:0007744" key="21">
    <source>
        <dbReference type="PDB" id="8CS9"/>
    </source>
</evidence>
<evidence type="ECO:0007744" key="22">
    <source>
        <dbReference type="PDB" id="8CSL"/>
    </source>
</evidence>
<evidence type="ECO:0007744" key="23">
    <source>
        <dbReference type="PDB" id="8CSW"/>
    </source>
</evidence>
<evidence type="ECO:0007744" key="24">
    <source>
        <dbReference type="PDB" id="8CTE"/>
    </source>
</evidence>
<evidence type="ECO:0007829" key="25">
    <source>
        <dbReference type="PDB" id="7UZS"/>
    </source>
</evidence>
<feature type="initiator methionine" description="Removed">
    <location>
        <position position="1"/>
    </location>
</feature>
<feature type="chain" id="PRO_0000213720" description="Protein 4.2">
    <location>
        <begin position="2"/>
        <end position="691"/>
    </location>
</feature>
<feature type="region of interest" description="Band 3 binding" evidence="1">
    <location>
        <begin position="31"/>
        <end position="39"/>
    </location>
</feature>
<feature type="modified residue" description="Phosphoserine; by PKA" evidence="16">
    <location>
        <position position="248"/>
    </location>
</feature>
<feature type="lipid moiety-binding region" description="N-myristoyl glycine" evidence="3">
    <location>
        <position position="2"/>
    </location>
</feature>
<feature type="splice variant" id="VSP_006416" description="In isoform Long." evidence="13 14">
    <original>Q</original>
    <variation>QGEPSQRSTGLAGLYAAPAASPVFIKGSGMD</variation>
    <location>
        <position position="3"/>
    </location>
</feature>
<feature type="splice variant" id="VSP_055340" description="In isoform 3." evidence="12">
    <location>
        <begin position="324"/>
        <end position="395"/>
    </location>
</feature>
<feature type="sequence variant" id="VAR_007482" description="In SPH5; Nippon/Fukuoka; dbSNP:rs104894487." evidence="2 4 7 9">
    <original>A</original>
    <variation>T</variation>
    <location>
        <position position="112"/>
    </location>
</feature>
<feature type="sequence variant" id="VAR_058099" description="In SPH5; Komatsu; dbSNP:rs143682977." evidence="10">
    <original>D</original>
    <variation>Y</variation>
    <location>
        <position position="145"/>
    </location>
</feature>
<feature type="sequence variant" id="VAR_012268" description="In SPH5; Tozeur; dbSNP:rs121917734." evidence="6">
    <original>R</original>
    <variation>Q</variation>
    <location>
        <position position="280"/>
    </location>
</feature>
<feature type="sequence variant" id="VAR_058100" description="In SPH5; Shiga; dbSNP:rs515726212." evidence="9">
    <original>R</original>
    <variation>C</variation>
    <location>
        <position position="287"/>
    </location>
</feature>
<feature type="sequence conflict" description="In Ref. 1; AAA74589/AAA52385 and 2; AAA35798." evidence="15" ref="1 2">
    <original>H</original>
    <variation>D</variation>
    <location>
        <position position="350"/>
    </location>
</feature>
<feature type="sequence conflict" description="In Ref. 1; AAA74589/AAA52385 and 2; AAA35798." evidence="15" ref="1 2">
    <original>L</original>
    <variation>V</variation>
    <location>
        <position position="376"/>
    </location>
</feature>
<feature type="strand" evidence="25">
    <location>
        <begin position="7"/>
        <end position="11"/>
    </location>
</feature>
<feature type="helix" evidence="25">
    <location>
        <begin position="14"/>
        <end position="20"/>
    </location>
</feature>
<feature type="turn" evidence="25">
    <location>
        <begin position="24"/>
        <end position="26"/>
    </location>
</feature>
<feature type="strand" evidence="25">
    <location>
        <begin position="28"/>
        <end position="30"/>
    </location>
</feature>
<feature type="strand" evidence="25">
    <location>
        <begin position="32"/>
        <end position="34"/>
    </location>
</feature>
<feature type="strand" evidence="25">
    <location>
        <begin position="39"/>
        <end position="47"/>
    </location>
</feature>
<feature type="helix" evidence="25">
    <location>
        <begin position="52"/>
        <end position="58"/>
    </location>
</feature>
<feature type="strand" evidence="25">
    <location>
        <begin position="59"/>
        <end position="68"/>
    </location>
</feature>
<feature type="turn" evidence="25">
    <location>
        <begin position="71"/>
        <end position="74"/>
    </location>
</feature>
<feature type="strand" evidence="25">
    <location>
        <begin position="76"/>
        <end position="82"/>
    </location>
</feature>
<feature type="strand" evidence="25">
    <location>
        <begin position="89"/>
        <end position="98"/>
    </location>
</feature>
<feature type="strand" evidence="25">
    <location>
        <begin position="101"/>
        <end position="107"/>
    </location>
</feature>
<feature type="strand" evidence="25">
    <location>
        <begin position="115"/>
        <end position="123"/>
    </location>
</feature>
<feature type="strand" evidence="25">
    <location>
        <begin position="129"/>
        <end position="137"/>
    </location>
</feature>
<feature type="helix" evidence="25">
    <location>
        <begin position="152"/>
        <end position="158"/>
    </location>
</feature>
<feature type="strand" evidence="25">
    <location>
        <begin position="163"/>
        <end position="170"/>
    </location>
</feature>
<feature type="strand" evidence="25">
    <location>
        <begin position="173"/>
        <end position="180"/>
    </location>
</feature>
<feature type="helix" evidence="25">
    <location>
        <begin position="188"/>
        <end position="196"/>
    </location>
</feature>
<feature type="helix" evidence="25">
    <location>
        <begin position="202"/>
        <end position="206"/>
    </location>
</feature>
<feature type="helix" evidence="25">
    <location>
        <begin position="208"/>
        <end position="226"/>
    </location>
</feature>
<feature type="helix" evidence="25">
    <location>
        <begin position="248"/>
        <end position="257"/>
    </location>
</feature>
<feature type="helix" evidence="25">
    <location>
        <begin position="265"/>
        <end position="269"/>
    </location>
</feature>
<feature type="helix" evidence="25">
    <location>
        <begin position="270"/>
        <end position="281"/>
    </location>
</feature>
<feature type="strand" evidence="25">
    <location>
        <begin position="286"/>
        <end position="297"/>
    </location>
</feature>
<feature type="strand" evidence="25">
    <location>
        <begin position="302"/>
        <end position="309"/>
    </location>
</feature>
<feature type="strand" evidence="25">
    <location>
        <begin position="320"/>
        <end position="334"/>
    </location>
</feature>
<feature type="strand" evidence="25">
    <location>
        <begin position="345"/>
        <end position="352"/>
    </location>
</feature>
<feature type="strand" evidence="25">
    <location>
        <begin position="362"/>
        <end position="367"/>
    </location>
</feature>
<feature type="helix" evidence="25">
    <location>
        <begin position="368"/>
        <end position="373"/>
    </location>
</feature>
<feature type="helix" evidence="25">
    <location>
        <begin position="382"/>
        <end position="388"/>
    </location>
</feature>
<feature type="strand" evidence="25">
    <location>
        <begin position="392"/>
        <end position="398"/>
    </location>
</feature>
<feature type="strand" evidence="25">
    <location>
        <begin position="404"/>
        <end position="406"/>
    </location>
</feature>
<feature type="strand" evidence="25">
    <location>
        <begin position="415"/>
        <end position="421"/>
    </location>
</feature>
<feature type="strand" evidence="25">
    <location>
        <begin position="428"/>
        <end position="430"/>
    </location>
</feature>
<feature type="helix" evidence="25">
    <location>
        <begin position="432"/>
        <end position="435"/>
    </location>
</feature>
<feature type="helix" evidence="25">
    <location>
        <begin position="442"/>
        <end position="458"/>
    </location>
</feature>
<feature type="strand" evidence="25">
    <location>
        <begin position="475"/>
        <end position="480"/>
    </location>
</feature>
<feature type="strand" evidence="25">
    <location>
        <begin position="483"/>
        <end position="486"/>
    </location>
</feature>
<feature type="strand" evidence="25">
    <location>
        <begin position="490"/>
        <end position="499"/>
    </location>
</feature>
<feature type="strand" evidence="25">
    <location>
        <begin position="501"/>
        <end position="503"/>
    </location>
</feature>
<feature type="strand" evidence="25">
    <location>
        <begin position="505"/>
        <end position="517"/>
    </location>
</feature>
<feature type="strand" evidence="25">
    <location>
        <begin position="522"/>
        <end position="535"/>
    </location>
</feature>
<feature type="strand" evidence="25">
    <location>
        <begin position="540"/>
        <end position="548"/>
    </location>
</feature>
<feature type="helix" evidence="25">
    <location>
        <begin position="549"/>
        <end position="551"/>
    </location>
</feature>
<feature type="strand" evidence="25">
    <location>
        <begin position="552"/>
        <end position="554"/>
    </location>
</feature>
<feature type="strand" evidence="25">
    <location>
        <begin position="560"/>
        <end position="570"/>
    </location>
</feature>
<feature type="strand" evidence="25">
    <location>
        <begin position="576"/>
        <end position="586"/>
    </location>
</feature>
<feature type="strand" evidence="25">
    <location>
        <begin position="590"/>
        <end position="593"/>
    </location>
</feature>
<feature type="strand" evidence="25">
    <location>
        <begin position="596"/>
        <end position="599"/>
    </location>
</feature>
<feature type="strand" evidence="25">
    <location>
        <begin position="604"/>
        <end position="611"/>
    </location>
</feature>
<feature type="strand" evidence="25">
    <location>
        <begin position="614"/>
        <end position="616"/>
    </location>
</feature>
<feature type="strand" evidence="25">
    <location>
        <begin position="622"/>
        <end position="626"/>
    </location>
</feature>
<feature type="turn" evidence="25">
    <location>
        <begin position="628"/>
        <end position="630"/>
    </location>
</feature>
<feature type="strand" evidence="25">
    <location>
        <begin position="631"/>
        <end position="638"/>
    </location>
</feature>
<feature type="strand" evidence="25">
    <location>
        <begin position="647"/>
        <end position="654"/>
    </location>
</feature>
<feature type="strand" evidence="25">
    <location>
        <begin position="660"/>
        <end position="669"/>
    </location>
</feature>
<feature type="strand" evidence="25">
    <location>
        <begin position="676"/>
        <end position="685"/>
    </location>
</feature>
<sequence>MGQALGIKSCDFQAARNNEEHHTKALSSRRLFVRRGQPFTIILYFRAPVRAFLPALKKVALTAQTGEQPSKINRTQATFPISSLGDRKWWSAVVEERDAQSWTISVTTPADAVIGHYSLLLQVSGRKQLLLGQFTLLFNPWNREDAVFLKNEAQRMEYLLNQNGLIYLGTADCIQAESWDFGQFEGDVIDLSLRLLSKDKQVEKWSQPVHVARVLGALLHFLKEQRVLPTPQTQATQEGALLNKRRGSVPILRQWLTGRGRPVYDGQAWVLAAVACTVLRCLGIPARVVTTFASAQGTGGRLLIDEYYNEEGLQNGEGQRGRIWIFQTSTECWMTRPALPQGYDGWQILHPSAPNGGGVLGSCDLVPVRAVKEGTLGLTPAVSDLFAAINASCVVWKCCEDGTLELTDSNTKYVGNNISTKGVGSDRCEDITQNYKYPEGSLQEKEVLERVEKEKMEREKDNGIRPPSLETASPLYLLLKAPSSLPLRGDAQISVTLVNHSEQEKAVQLAIGVQAVHYNGVLAAKLWRKKLHLTLSANLEKIITIGLFFSNFERNPPENTFLRLTAMATHSESNLSCFAQEDIAICRPHLAIKMPEKAEQYQPLTASVSLQNSLDAPMEDCVISILGRGLIHRERSYRFRSVWPENTMCAKFQFTPTHVGLQRLTVEVDCNMFQNLTNYKSVTVVAPELSA</sequence>
<comment type="function">
    <text evidence="5">Component of the ankyrin-1 complex, a multiprotein complex involved in the stability and shape of the erythrocyte membrane.</text>
</comment>
<comment type="subunit">
    <text evidence="5">Component of the ankyrin-1 complex in the erythrocyte, composed of ANK1, RHCE, RHAG, SLC4A1, EPB42, GYPA, GYPB and AQP1 (PubMed:35835865). Interacts with SLC4A1 (via the cytoplasmic domain); this interaction is mediated by the SLC4A1 Band 3-I dimer (PubMed:35835865). Interacts with ANK1 (via ANK 1-13 repeats) (PubMed:35835865). Interacts with AQP1 (via the C-terminal) (PubMed:35835865).</text>
</comment>
<comment type="interaction">
    <interactant intactId="EBI-1182496">
        <id>P16452</id>
    </interactant>
    <interactant intactId="EBI-2432309">
        <id>Q92876</id>
        <label>KLK6</label>
    </interactant>
    <organismsDiffer>false</organismsDiffer>
    <experiments>3</experiments>
</comment>
<comment type="interaction">
    <interactant intactId="EBI-1182496">
        <id>P16452</id>
    </interactant>
    <interactant intactId="EBI-1182445">
        <id>P58062</id>
        <label>SPINK7</label>
    </interactant>
    <organismsDiffer>false</organismsDiffer>
    <experiments>3</experiments>
</comment>
<comment type="subcellular location">
    <subcellularLocation>
        <location>Cell membrane</location>
        <topology>Lipid-anchor</topology>
        <orientation>Cytoplasmic side</orientation>
    </subcellularLocation>
    <subcellularLocation>
        <location>Cytoplasm</location>
        <location>Cytoskeleton</location>
    </subcellularLocation>
    <text>Cytoplasmic surface of erythrocyte membranes.</text>
</comment>
<comment type="alternative products">
    <event type="alternative splicing"/>
    <isoform>
        <id>P16452-1</id>
        <name>Short</name>
        <sequence type="displayed"/>
    </isoform>
    <isoform>
        <id>P16452-2</id>
        <name>Long</name>
        <sequence type="described" ref="VSP_006416"/>
    </isoform>
    <isoform>
        <id>P16452-3</id>
        <name>3</name>
        <sequence type="described" ref="VSP_055340"/>
    </isoform>
</comment>
<comment type="PTM">
    <text evidence="8">Both cAMP-dependent kinase (CAPK) and another kinase present in the red-blood cells seem to be able to phosphorylate EPB42.</text>
</comment>
<comment type="disease" evidence="2 4 6 7 9 10">
    <disease id="DI-02325">
        <name>Spherocytosis 5</name>
        <acronym>SPH5</acronym>
        <description>Spherocytosis is a hematologic disorder leading to chronic hemolytic anemia and characterized by numerous abnormally shaped erythrocytes which are generally spheroidal. Absence of band 4.2 associated with spur or target erythrocytes has also been reported.</description>
        <dbReference type="MIM" id="612690"/>
    </disease>
    <text>The disease is caused by variants affecting the gene represented in this entry.</text>
</comment>
<comment type="miscellaneous">
    <text>The substitution of an Ala for a Cys in the active site may be responsible for the lack of transglutaminase activity of band 4.2.</text>
</comment>
<comment type="miscellaneous">
    <molecule>Isoform Short</molecule>
    <text>Major isoform.</text>
</comment>
<comment type="similarity">
    <text evidence="15">Belongs to the transglutaminase superfamily. Transglutaminase family.</text>
</comment>
<comment type="sequence caution" evidence="15">
    <conflict type="frameshift">
        <sequence resource="EMBL-CDS" id="AAA36401"/>
    </conflict>
</comment>
<comment type="sequence caution" evidence="15">
    <conflict type="frameshift">
        <sequence resource="EMBL-CDS" id="AAA36402"/>
    </conflict>
</comment>
<dbReference type="EMBL" id="M60298">
    <property type="protein sequence ID" value="AAA74589.1"/>
    <property type="molecule type" value="mRNA"/>
</dbReference>
<dbReference type="EMBL" id="L06519">
    <property type="protein sequence ID" value="AAA52385.1"/>
    <property type="molecule type" value="Genomic_DNA"/>
</dbReference>
<dbReference type="EMBL" id="L06447">
    <property type="protein sequence ID" value="AAA52385.1"/>
    <property type="status" value="JOINED"/>
    <property type="molecule type" value="Genomic_DNA"/>
</dbReference>
<dbReference type="EMBL" id="L06448">
    <property type="protein sequence ID" value="AAA52385.1"/>
    <property type="status" value="JOINED"/>
    <property type="molecule type" value="Genomic_DNA"/>
</dbReference>
<dbReference type="EMBL" id="L06449">
    <property type="protein sequence ID" value="AAA52385.1"/>
    <property type="status" value="JOINED"/>
    <property type="molecule type" value="Genomic_DNA"/>
</dbReference>
<dbReference type="EMBL" id="L06450">
    <property type="protein sequence ID" value="AAA52385.1"/>
    <property type="status" value="JOINED"/>
    <property type="molecule type" value="Genomic_DNA"/>
</dbReference>
<dbReference type="EMBL" id="L06511">
    <property type="protein sequence ID" value="AAA52385.1"/>
    <property type="status" value="JOINED"/>
    <property type="molecule type" value="Genomic_DNA"/>
</dbReference>
<dbReference type="EMBL" id="L06512">
    <property type="protein sequence ID" value="AAA52385.1"/>
    <property type="status" value="JOINED"/>
    <property type="molecule type" value="Genomic_DNA"/>
</dbReference>
<dbReference type="EMBL" id="L06513">
    <property type="protein sequence ID" value="AAA52385.1"/>
    <property type="status" value="JOINED"/>
    <property type="molecule type" value="Genomic_DNA"/>
</dbReference>
<dbReference type="EMBL" id="L06515">
    <property type="protein sequence ID" value="AAA52385.1"/>
    <property type="status" value="JOINED"/>
    <property type="molecule type" value="Genomic_DNA"/>
</dbReference>
<dbReference type="EMBL" id="L06516">
    <property type="protein sequence ID" value="AAA52385.1"/>
    <property type="status" value="JOINED"/>
    <property type="molecule type" value="Genomic_DNA"/>
</dbReference>
<dbReference type="EMBL" id="L06517">
    <property type="protein sequence ID" value="AAA52385.1"/>
    <property type="status" value="JOINED"/>
    <property type="molecule type" value="Genomic_DNA"/>
</dbReference>
<dbReference type="EMBL" id="L06518">
    <property type="protein sequence ID" value="AAA52385.1"/>
    <property type="status" value="JOINED"/>
    <property type="molecule type" value="Genomic_DNA"/>
</dbReference>
<dbReference type="EMBL" id="M29399">
    <property type="protein sequence ID" value="AAA35798.1"/>
    <property type="molecule type" value="mRNA"/>
</dbReference>
<dbReference type="EMBL" id="M30647">
    <property type="protein sequence ID" value="AAA36401.1"/>
    <property type="status" value="ALT_FRAME"/>
    <property type="molecule type" value="mRNA"/>
</dbReference>
<dbReference type="EMBL" id="M30646">
    <property type="protein sequence ID" value="AAA36402.1"/>
    <property type="status" value="ALT_FRAME"/>
    <property type="molecule type" value="mRNA"/>
</dbReference>
<dbReference type="EMBL" id="AC068724">
    <property type="status" value="NOT_ANNOTATED_CDS"/>
    <property type="molecule type" value="Genomic_DNA"/>
</dbReference>
<dbReference type="EMBL" id="CH471125">
    <property type="protein sequence ID" value="EAW92591.1"/>
    <property type="molecule type" value="Genomic_DNA"/>
</dbReference>
<dbReference type="EMBL" id="BC096093">
    <property type="protein sequence ID" value="AAH96093.1"/>
    <property type="molecule type" value="mRNA"/>
</dbReference>
<dbReference type="EMBL" id="BC096094">
    <property type="protein sequence ID" value="AAH96094.1"/>
    <property type="molecule type" value="mRNA"/>
</dbReference>
<dbReference type="EMBL" id="BC099627">
    <property type="protein sequence ID" value="AAH99627.1"/>
    <property type="molecule type" value="mRNA"/>
</dbReference>
<dbReference type="CCDS" id="CCDS10093.1">
    <molecule id="P16452-2"/>
</dbReference>
<dbReference type="CCDS" id="CCDS45249.1">
    <molecule id="P16452-1"/>
</dbReference>
<dbReference type="PIR" id="A39707">
    <property type="entry name" value="A39707"/>
</dbReference>
<dbReference type="RefSeq" id="NP_000110.2">
    <molecule id="P16452-2"/>
    <property type="nucleotide sequence ID" value="NM_000119.3"/>
</dbReference>
<dbReference type="RefSeq" id="NP_001107606.1">
    <molecule id="P16452-1"/>
    <property type="nucleotide sequence ID" value="NM_001114134.2"/>
</dbReference>
<dbReference type="RefSeq" id="XP_011519651.1">
    <property type="nucleotide sequence ID" value="XM_011521349.2"/>
</dbReference>
<dbReference type="RefSeq" id="XP_011519652.1">
    <molecule id="P16452-2"/>
    <property type="nucleotide sequence ID" value="XM_011521350.3"/>
</dbReference>
<dbReference type="RefSeq" id="XP_011519653.1">
    <molecule id="P16452-2"/>
    <property type="nucleotide sequence ID" value="XM_011521351.3"/>
</dbReference>
<dbReference type="RefSeq" id="XP_054233458.1">
    <molecule id="P16452-2"/>
    <property type="nucleotide sequence ID" value="XM_054377483.1"/>
</dbReference>
<dbReference type="RefSeq" id="XP_054233459.1">
    <molecule id="P16452-2"/>
    <property type="nucleotide sequence ID" value="XM_054377484.1"/>
</dbReference>
<dbReference type="RefSeq" id="XP_054233460.1">
    <molecule id="P16452-2"/>
    <property type="nucleotide sequence ID" value="XM_054377485.1"/>
</dbReference>
<dbReference type="PDB" id="7TVZ">
    <property type="method" value="EM"/>
    <property type="resolution" value="3.60 A"/>
    <property type="chains" value="E=1-691"/>
</dbReference>
<dbReference type="PDB" id="7TW0">
    <property type="method" value="EM"/>
    <property type="resolution" value="4.60 A"/>
    <property type="chains" value="E=1-691"/>
</dbReference>
<dbReference type="PDB" id="7TW1">
    <property type="method" value="EM"/>
    <property type="resolution" value="4.60 A"/>
    <property type="chains" value="E/F=1-691"/>
</dbReference>
<dbReference type="PDB" id="7TW3">
    <property type="method" value="EM"/>
    <property type="resolution" value="4.40 A"/>
    <property type="chains" value="E=1-691"/>
</dbReference>
<dbReference type="PDB" id="7TW5">
    <property type="method" value="EM"/>
    <property type="resolution" value="5.70 A"/>
    <property type="chains" value="E=1-691"/>
</dbReference>
<dbReference type="PDB" id="7TW6">
    <property type="method" value="EM"/>
    <property type="resolution" value="5.60 A"/>
    <property type="chains" value="E=1-691"/>
</dbReference>
<dbReference type="PDB" id="7UZS">
    <property type="method" value="EM"/>
    <property type="resolution" value="2.20 A"/>
    <property type="chains" value="X=1-691"/>
</dbReference>
<dbReference type="PDB" id="7V0K">
    <property type="method" value="EM"/>
    <property type="resolution" value="2.40 A"/>
    <property type="chains" value="X=1-691"/>
</dbReference>
<dbReference type="PDB" id="7V0Q">
    <property type="method" value="EM"/>
    <property type="resolution" value="2.50 A"/>
    <property type="chains" value="X=1-691"/>
</dbReference>
<dbReference type="PDB" id="8CS9">
    <property type="method" value="EM"/>
    <property type="resolution" value="2.74 A"/>
    <property type="chains" value="X=1-691"/>
</dbReference>
<dbReference type="PDB" id="8CSL">
    <property type="method" value="EM"/>
    <property type="resolution" value="25.00 A"/>
    <property type="chains" value="X=1-691"/>
</dbReference>
<dbReference type="PDB" id="8CSW">
    <property type="method" value="EM"/>
    <property type="resolution" value="2.50 A"/>
    <property type="chains" value="X=1-691"/>
</dbReference>
<dbReference type="PDB" id="8CTE">
    <property type="method" value="EM"/>
    <property type="resolution" value="2.90 A"/>
    <property type="chains" value="X=1-691"/>
</dbReference>
<dbReference type="PDBsum" id="7TVZ"/>
<dbReference type="PDBsum" id="7TW0"/>
<dbReference type="PDBsum" id="7TW1"/>
<dbReference type="PDBsum" id="7TW3"/>
<dbReference type="PDBsum" id="7TW5"/>
<dbReference type="PDBsum" id="7TW6"/>
<dbReference type="PDBsum" id="7UZS"/>
<dbReference type="PDBsum" id="7V0K"/>
<dbReference type="PDBsum" id="7V0Q"/>
<dbReference type="PDBsum" id="8CS9"/>
<dbReference type="PDBsum" id="8CSL"/>
<dbReference type="PDBsum" id="8CSW"/>
<dbReference type="PDBsum" id="8CTE"/>
<dbReference type="EMDB" id="EMD-26142"/>
<dbReference type="EMDB" id="EMD-26146"/>
<dbReference type="EMDB" id="EMD-26147"/>
<dbReference type="EMDB" id="EMD-26149"/>
<dbReference type="EMDB" id="EMD-26151"/>
<dbReference type="EMDB" id="EMD-26153"/>
<dbReference type="EMDB" id="EMD-26917"/>
<dbReference type="EMDB" id="EMD-26943"/>
<dbReference type="EMDB" id="EMD-26948"/>
<dbReference type="EMDB" id="EMD-26960"/>
<dbReference type="EMDB" id="EMD-26965"/>
<dbReference type="EMDB" id="EMD-26973"/>
<dbReference type="EMDB" id="EMD-26988"/>
<dbReference type="SMR" id="P16452"/>
<dbReference type="BioGRID" id="108352">
    <property type="interactions" value="35"/>
</dbReference>
<dbReference type="FunCoup" id="P16452">
    <property type="interactions" value="44"/>
</dbReference>
<dbReference type="IntAct" id="P16452">
    <property type="interactions" value="9"/>
</dbReference>
<dbReference type="STRING" id="9606.ENSP00000497777"/>
<dbReference type="GlyConnect" id="2894">
    <property type="glycosylation" value="1 O-GlcNAc glycan (1 site)"/>
</dbReference>
<dbReference type="GlyCosmos" id="P16452">
    <property type="glycosylation" value="1 site, 1 glycan"/>
</dbReference>
<dbReference type="GlyGen" id="P16452">
    <property type="glycosylation" value="2 sites, 1 O-linked glycan (1 site)"/>
</dbReference>
<dbReference type="iPTMnet" id="P16452"/>
<dbReference type="PhosphoSitePlus" id="P16452"/>
<dbReference type="BioMuta" id="EPB42"/>
<dbReference type="DMDM" id="215274164"/>
<dbReference type="jPOST" id="P16452"/>
<dbReference type="MassIVE" id="P16452"/>
<dbReference type="PaxDb" id="9606-ENSP00000300215"/>
<dbReference type="PeptideAtlas" id="P16452"/>
<dbReference type="ProteomicsDB" id="53363">
    <molecule id="P16452-1"/>
</dbReference>
<dbReference type="ProteomicsDB" id="53364">
    <molecule id="P16452-2"/>
</dbReference>
<dbReference type="ProteomicsDB" id="62192"/>
<dbReference type="Antibodypedia" id="11125">
    <property type="antibodies" value="107 antibodies from 19 providers"/>
</dbReference>
<dbReference type="DNASU" id="2038"/>
<dbReference type="Ensembl" id="ENST00000441366.7">
    <molecule id="P16452-1"/>
    <property type="protein sequence ID" value="ENSP00000396616.2"/>
    <property type="gene ID" value="ENSG00000166947.15"/>
</dbReference>
<dbReference type="Ensembl" id="ENST00000648595.1">
    <molecule id="P16452-2"/>
    <property type="protein sequence ID" value="ENSP00000497777.1"/>
    <property type="gene ID" value="ENSG00000166947.15"/>
</dbReference>
<dbReference type="GeneID" id="2038"/>
<dbReference type="KEGG" id="hsa:2038"/>
<dbReference type="MANE-Select" id="ENST00000441366.7">
    <property type="protein sequence ID" value="ENSP00000396616.2"/>
    <property type="RefSeq nucleotide sequence ID" value="NM_001114134.2"/>
    <property type="RefSeq protein sequence ID" value="NP_001107606.1"/>
</dbReference>
<dbReference type="UCSC" id="uc001zra.5">
    <molecule id="P16452-1"/>
    <property type="organism name" value="human"/>
</dbReference>
<dbReference type="AGR" id="HGNC:3381"/>
<dbReference type="CTD" id="2038"/>
<dbReference type="DisGeNET" id="2038"/>
<dbReference type="GeneCards" id="EPB42"/>
<dbReference type="GeneReviews" id="EPB42"/>
<dbReference type="HGNC" id="HGNC:3381">
    <property type="gene designation" value="EPB42"/>
</dbReference>
<dbReference type="HPA" id="ENSG00000166947">
    <property type="expression patterns" value="Tissue enriched (bone)"/>
</dbReference>
<dbReference type="MalaCards" id="EPB42"/>
<dbReference type="MIM" id="177070">
    <property type="type" value="gene"/>
</dbReference>
<dbReference type="MIM" id="612690">
    <property type="type" value="phenotype"/>
</dbReference>
<dbReference type="neXtProt" id="NX_P16452"/>
<dbReference type="OpenTargets" id="ENSG00000166947"/>
<dbReference type="Orphanet" id="822">
    <property type="disease" value="Hereditary spherocytosis"/>
</dbReference>
<dbReference type="PharmGKB" id="PA27814"/>
<dbReference type="VEuPathDB" id="HostDB:ENSG00000166947"/>
<dbReference type="eggNOG" id="ENOG502R9T9">
    <property type="taxonomic scope" value="Eukaryota"/>
</dbReference>
<dbReference type="GeneTree" id="ENSGT01050000244866"/>
<dbReference type="HOGENOM" id="CLU_013435_3_0_1"/>
<dbReference type="InParanoid" id="P16452"/>
<dbReference type="OMA" id="NPWGRED"/>
<dbReference type="OrthoDB" id="437511at2759"/>
<dbReference type="PAN-GO" id="P16452">
    <property type="GO annotations" value="2 GO annotations based on evolutionary models"/>
</dbReference>
<dbReference type="PhylomeDB" id="P16452"/>
<dbReference type="TreeFam" id="TF324278"/>
<dbReference type="BRENDA" id="2.3.2.13">
    <property type="organism ID" value="2681"/>
</dbReference>
<dbReference type="PathwayCommons" id="P16452"/>
<dbReference type="SignaLink" id="P16452"/>
<dbReference type="SIGNOR" id="P16452"/>
<dbReference type="BioGRID-ORCS" id="2038">
    <property type="hits" value="9 hits in 1148 CRISPR screens"/>
</dbReference>
<dbReference type="CD-CODE" id="FB4E32DD">
    <property type="entry name" value="Presynaptic clusters and postsynaptic densities"/>
</dbReference>
<dbReference type="ChiTaRS" id="EPB42">
    <property type="organism name" value="human"/>
</dbReference>
<dbReference type="GeneWiki" id="Protein_4.2"/>
<dbReference type="GenomeRNAi" id="2038"/>
<dbReference type="Pharos" id="P16452">
    <property type="development level" value="Tbio"/>
</dbReference>
<dbReference type="PRO" id="PR:P16452"/>
<dbReference type="Proteomes" id="UP000005640">
    <property type="component" value="Chromosome 15"/>
</dbReference>
<dbReference type="RNAct" id="P16452">
    <property type="molecule type" value="protein"/>
</dbReference>
<dbReference type="Bgee" id="ENSG00000166947">
    <property type="expression patterns" value="Expressed in blood and 71 other cell types or tissues"/>
</dbReference>
<dbReference type="ExpressionAtlas" id="P16452">
    <property type="expression patterns" value="baseline and differential"/>
</dbReference>
<dbReference type="GO" id="GO:0170014">
    <property type="term" value="C:ankyrin-1 complex"/>
    <property type="evidence" value="ECO:0000314"/>
    <property type="project" value="UniProtKB"/>
</dbReference>
<dbReference type="GO" id="GO:0030863">
    <property type="term" value="C:cortical cytoskeleton"/>
    <property type="evidence" value="ECO:0007669"/>
    <property type="project" value="Ensembl"/>
</dbReference>
<dbReference type="GO" id="GO:0005856">
    <property type="term" value="C:cytoskeleton"/>
    <property type="evidence" value="ECO:0000304"/>
    <property type="project" value="ProtInc"/>
</dbReference>
<dbReference type="GO" id="GO:0005886">
    <property type="term" value="C:plasma membrane"/>
    <property type="evidence" value="ECO:0000304"/>
    <property type="project" value="ProtInc"/>
</dbReference>
<dbReference type="GO" id="GO:0005524">
    <property type="term" value="F:ATP binding"/>
    <property type="evidence" value="ECO:0000304"/>
    <property type="project" value="ProtInc"/>
</dbReference>
<dbReference type="GO" id="GO:0003810">
    <property type="term" value="F:protein-glutamine gamma-glutamyltransferase activity"/>
    <property type="evidence" value="ECO:0000318"/>
    <property type="project" value="GO_Central"/>
</dbReference>
<dbReference type="GO" id="GO:0005200">
    <property type="term" value="F:structural constituent of cytoskeleton"/>
    <property type="evidence" value="ECO:0000304"/>
    <property type="project" value="ProtInc"/>
</dbReference>
<dbReference type="GO" id="GO:0000902">
    <property type="term" value="P:cell morphogenesis"/>
    <property type="evidence" value="ECO:0007669"/>
    <property type="project" value="Ensembl"/>
</dbReference>
<dbReference type="GO" id="GO:0043249">
    <property type="term" value="P:erythrocyte maturation"/>
    <property type="evidence" value="ECO:0007669"/>
    <property type="project" value="UniProtKB-KW"/>
</dbReference>
<dbReference type="GO" id="GO:0020027">
    <property type="term" value="P:hemoglobin metabolic process"/>
    <property type="evidence" value="ECO:0007669"/>
    <property type="project" value="Ensembl"/>
</dbReference>
<dbReference type="GO" id="GO:0060586">
    <property type="term" value="P:multicellular organismal-level iron ion homeostasis"/>
    <property type="evidence" value="ECO:0007669"/>
    <property type="project" value="Ensembl"/>
</dbReference>
<dbReference type="GO" id="GO:0008360">
    <property type="term" value="P:regulation of cell shape"/>
    <property type="evidence" value="ECO:0007669"/>
    <property type="project" value="UniProtKB-KW"/>
</dbReference>
<dbReference type="GO" id="GO:0048536">
    <property type="term" value="P:spleen development"/>
    <property type="evidence" value="ECO:0007669"/>
    <property type="project" value="Ensembl"/>
</dbReference>
<dbReference type="FunFam" id="2.60.40.10:FF:001404">
    <property type="entry name" value="Erythrocyte membrane protein band 4.2"/>
    <property type="match status" value="1"/>
</dbReference>
<dbReference type="FunFam" id="2.60.40.10:FF:001480">
    <property type="entry name" value="Erythrocyte membrane protein band 4.2"/>
    <property type="match status" value="1"/>
</dbReference>
<dbReference type="FunFam" id="3.90.260.10:FF:000002">
    <property type="entry name" value="Erythrocyte membrane protein band 4.2"/>
    <property type="match status" value="1"/>
</dbReference>
<dbReference type="FunFam" id="2.60.40.10:FF:000090">
    <property type="entry name" value="Protein-glutamine gamma-glutamyltransferase 2"/>
    <property type="match status" value="1"/>
</dbReference>
<dbReference type="Gene3D" id="2.60.40.10">
    <property type="entry name" value="Immunoglobulins"/>
    <property type="match status" value="3"/>
</dbReference>
<dbReference type="Gene3D" id="3.90.260.10">
    <property type="entry name" value="Transglutaminase-like"/>
    <property type="match status" value="1"/>
</dbReference>
<dbReference type="InterPro" id="IPR013783">
    <property type="entry name" value="Ig-like_fold"/>
</dbReference>
<dbReference type="InterPro" id="IPR014756">
    <property type="entry name" value="Ig_E-set"/>
</dbReference>
<dbReference type="InterPro" id="IPR038765">
    <property type="entry name" value="Papain-like_cys_pep_sf"/>
</dbReference>
<dbReference type="InterPro" id="IPR050779">
    <property type="entry name" value="Transglutaminase"/>
</dbReference>
<dbReference type="InterPro" id="IPR002931">
    <property type="entry name" value="Transglutaminase-like"/>
</dbReference>
<dbReference type="InterPro" id="IPR036985">
    <property type="entry name" value="Transglutaminase-like_sf"/>
</dbReference>
<dbReference type="InterPro" id="IPR023608">
    <property type="entry name" value="Transglutaminase_animal"/>
</dbReference>
<dbReference type="InterPro" id="IPR013808">
    <property type="entry name" value="Transglutaminase_AS"/>
</dbReference>
<dbReference type="InterPro" id="IPR008958">
    <property type="entry name" value="Transglutaminase_C"/>
</dbReference>
<dbReference type="InterPro" id="IPR036238">
    <property type="entry name" value="Transglutaminase_C_sf"/>
</dbReference>
<dbReference type="InterPro" id="IPR001102">
    <property type="entry name" value="Transglutaminase_N"/>
</dbReference>
<dbReference type="PANTHER" id="PTHR11590:SF44">
    <property type="entry name" value="PROTEIN 4.2"/>
    <property type="match status" value="1"/>
</dbReference>
<dbReference type="PANTHER" id="PTHR11590">
    <property type="entry name" value="PROTEIN-GLUTAMINE GAMMA-GLUTAMYLTRANSFERASE"/>
    <property type="match status" value="1"/>
</dbReference>
<dbReference type="Pfam" id="PF00927">
    <property type="entry name" value="Transglut_C"/>
    <property type="match status" value="2"/>
</dbReference>
<dbReference type="Pfam" id="PF01841">
    <property type="entry name" value="Transglut_core"/>
    <property type="match status" value="1"/>
</dbReference>
<dbReference type="Pfam" id="PF00868">
    <property type="entry name" value="Transglut_N"/>
    <property type="match status" value="1"/>
</dbReference>
<dbReference type="PIRSF" id="PIRSF000459">
    <property type="entry name" value="TGM_EBP42"/>
    <property type="match status" value="1"/>
</dbReference>
<dbReference type="SMART" id="SM00460">
    <property type="entry name" value="TGc"/>
    <property type="match status" value="1"/>
</dbReference>
<dbReference type="SUPFAM" id="SSF54001">
    <property type="entry name" value="Cysteine proteinases"/>
    <property type="match status" value="1"/>
</dbReference>
<dbReference type="SUPFAM" id="SSF81296">
    <property type="entry name" value="E set domains"/>
    <property type="match status" value="1"/>
</dbReference>
<dbReference type="SUPFAM" id="SSF49309">
    <property type="entry name" value="Transglutaminase, two C-terminal domains"/>
    <property type="match status" value="2"/>
</dbReference>
<dbReference type="PROSITE" id="PS00547">
    <property type="entry name" value="TRANSGLUTAMINASES"/>
    <property type="match status" value="1"/>
</dbReference>
<accession>P16452</accession>
<accession>Q4KKX0</accession>
<accession>Q4VB97</accession>
<keyword id="KW-0002">3D-structure</keyword>
<keyword id="KW-0025">Alternative splicing</keyword>
<keyword id="KW-1003">Cell membrane</keyword>
<keyword id="KW-0133">Cell shape</keyword>
<keyword id="KW-0963">Cytoplasm</keyword>
<keyword id="KW-0206">Cytoskeleton</keyword>
<keyword id="KW-0903">Direct protein sequencing</keyword>
<keyword id="KW-0225">Disease variant</keyword>
<keyword id="KW-0265">Erythrocyte maturation</keyword>
<keyword id="KW-0360">Hereditary hemolytic anemia</keyword>
<keyword id="KW-0449">Lipoprotein</keyword>
<keyword id="KW-0472">Membrane</keyword>
<keyword id="KW-0519">Myristate</keyword>
<keyword id="KW-0597">Phosphoprotein</keyword>
<keyword id="KW-1267">Proteomics identification</keyword>
<keyword id="KW-1185">Reference proteome</keyword>
<reference key="1">
    <citation type="journal article" date="1991" name="Proc. Natl. Acad. Sci. U.S.A.">
        <title>Organization of the gene for human erythrocyte membrane protein 4.2: structural similarities with the gene for the a subunit of factor XIII.</title>
        <authorList>
            <person name="Korsgren C."/>
            <person name="Cohen C.M."/>
        </authorList>
    </citation>
    <scope>NUCLEOTIDE SEQUENCE [MRNA] (ISOFORM LONG)</scope>
    <source>
        <tissue>Reticulocyte</tissue>
    </source>
</reference>
<reference key="2">
    <citation type="journal article" date="1990" name="Proc. Natl. Acad. Sci. U.S.A.">
        <title>Complete amino acid sequence and homologies of human erythrocyte membrane protein band 4.2.</title>
        <authorList>
            <person name="Korsgren C."/>
            <person name="Lawler J."/>
            <person name="Lambert S."/>
            <person name="Speicher D."/>
            <person name="Cohen C.M."/>
        </authorList>
    </citation>
    <scope>NUCLEOTIDE SEQUENCE [MRNA]</scope>
    <scope>PARTIAL PROTEIN SEQUENCE (ISOFORM SHORT)</scope>
    <source>
        <tissue>Reticulocyte</tissue>
    </source>
</reference>
<reference key="3">
    <citation type="journal article" date="1990" name="Proc. Natl. Acad. Sci. U.S.A.">
        <title>Molecular cloning of human protein 4.2: a major component of the erythrocyte membrane.</title>
        <authorList>
            <person name="Sung L.A."/>
            <person name="Chien S."/>
            <person name="Chang L.-S."/>
            <person name="Lambert K."/>
            <person name="Bliss S.A."/>
            <person name="Bouhassira E.E."/>
            <person name="Nagel R.L."/>
            <person name="Schwartz R.S."/>
            <person name="Rybicki A.C."/>
        </authorList>
    </citation>
    <scope>NUCLEOTIDE SEQUENCE [MRNA] (ISOFORMS LONG AND SHORT)</scope>
    <source>
        <tissue>Reticulocyte</tissue>
    </source>
</reference>
<reference key="4">
    <citation type="journal article" date="2006" name="Nature">
        <title>Analysis of the DNA sequence and duplication history of human chromosome 15.</title>
        <authorList>
            <person name="Zody M.C."/>
            <person name="Garber M."/>
            <person name="Sharpe T."/>
            <person name="Young S.K."/>
            <person name="Rowen L."/>
            <person name="O'Neill K."/>
            <person name="Whittaker C.A."/>
            <person name="Kamal M."/>
            <person name="Chang J.L."/>
            <person name="Cuomo C.A."/>
            <person name="Dewar K."/>
            <person name="FitzGerald M.G."/>
            <person name="Kodira C.D."/>
            <person name="Madan A."/>
            <person name="Qin S."/>
            <person name="Yang X."/>
            <person name="Abbasi N."/>
            <person name="Abouelleil A."/>
            <person name="Arachchi H.M."/>
            <person name="Baradarani L."/>
            <person name="Birditt B."/>
            <person name="Bloom S."/>
            <person name="Bloom T."/>
            <person name="Borowsky M.L."/>
            <person name="Burke J."/>
            <person name="Butler J."/>
            <person name="Cook A."/>
            <person name="DeArellano K."/>
            <person name="DeCaprio D."/>
            <person name="Dorris L. III"/>
            <person name="Dors M."/>
            <person name="Eichler E.E."/>
            <person name="Engels R."/>
            <person name="Fahey J."/>
            <person name="Fleetwood P."/>
            <person name="Friedman C."/>
            <person name="Gearin G."/>
            <person name="Hall J.L."/>
            <person name="Hensley G."/>
            <person name="Johnson E."/>
            <person name="Jones C."/>
            <person name="Kamat A."/>
            <person name="Kaur A."/>
            <person name="Locke D.P."/>
            <person name="Madan A."/>
            <person name="Munson G."/>
            <person name="Jaffe D.B."/>
            <person name="Lui A."/>
            <person name="Macdonald P."/>
            <person name="Mauceli E."/>
            <person name="Naylor J.W."/>
            <person name="Nesbitt R."/>
            <person name="Nicol R."/>
            <person name="O'Leary S.B."/>
            <person name="Ratcliffe A."/>
            <person name="Rounsley S."/>
            <person name="She X."/>
            <person name="Sneddon K.M.B."/>
            <person name="Stewart S."/>
            <person name="Sougnez C."/>
            <person name="Stone S.M."/>
            <person name="Topham K."/>
            <person name="Vincent D."/>
            <person name="Wang S."/>
            <person name="Zimmer A.R."/>
            <person name="Birren B.W."/>
            <person name="Hood L."/>
            <person name="Lander E.S."/>
            <person name="Nusbaum C."/>
        </authorList>
    </citation>
    <scope>NUCLEOTIDE SEQUENCE [LARGE SCALE GENOMIC DNA]</scope>
</reference>
<reference key="5">
    <citation type="submission" date="2005-07" db="EMBL/GenBank/DDBJ databases">
        <authorList>
            <person name="Mural R.J."/>
            <person name="Istrail S."/>
            <person name="Sutton G.G."/>
            <person name="Florea L."/>
            <person name="Halpern A.L."/>
            <person name="Mobarry C.M."/>
            <person name="Lippert R."/>
            <person name="Walenz B."/>
            <person name="Shatkay H."/>
            <person name="Dew I."/>
            <person name="Miller J.R."/>
            <person name="Flanigan M.J."/>
            <person name="Edwards N.J."/>
            <person name="Bolanos R."/>
            <person name="Fasulo D."/>
            <person name="Halldorsson B.V."/>
            <person name="Hannenhalli S."/>
            <person name="Turner R."/>
            <person name="Yooseph S."/>
            <person name="Lu F."/>
            <person name="Nusskern D.R."/>
            <person name="Shue B.C."/>
            <person name="Zheng X.H."/>
            <person name="Zhong F."/>
            <person name="Delcher A.L."/>
            <person name="Huson D.H."/>
            <person name="Kravitz S.A."/>
            <person name="Mouchard L."/>
            <person name="Reinert K."/>
            <person name="Remington K.A."/>
            <person name="Clark A.G."/>
            <person name="Waterman M.S."/>
            <person name="Eichler E.E."/>
            <person name="Adams M.D."/>
            <person name="Hunkapiller M.W."/>
            <person name="Myers E.W."/>
            <person name="Venter J.C."/>
        </authorList>
    </citation>
    <scope>NUCLEOTIDE SEQUENCE [LARGE SCALE GENOMIC DNA]</scope>
</reference>
<reference key="6">
    <citation type="journal article" date="2004" name="Genome Res.">
        <title>The status, quality, and expansion of the NIH full-length cDNA project: the Mammalian Gene Collection (MGC).</title>
        <authorList>
            <consortium name="The MGC Project Team"/>
        </authorList>
    </citation>
    <scope>NUCLEOTIDE SEQUENCE [LARGE SCALE MRNA] (ISOFORMS SHORT AND 3)</scope>
</reference>
<reference key="7">
    <citation type="journal article" date="1992" name="J. Biol. Chem.">
        <title>Human erythrocyte protein 4.2, a high copy number membrane protein, is N-myristylated.</title>
        <authorList>
            <person name="Risinger M.A."/>
            <person name="Dotimas E.M."/>
            <person name="Cohen C.M."/>
        </authorList>
    </citation>
    <scope>MYRISTOYLATION AT GLY-2</scope>
</reference>
<reference key="8">
    <citation type="journal article" date="1993" name="Biochim. Biophys. Acta">
        <title>Structural domain mapping and phosphorylation of human erythrocyte pallidin (band 4.2).</title>
        <authorList>
            <person name="Dotimas E."/>
            <person name="Speicher D.W."/>
            <person name="Guptaroy B."/>
            <person name="Cohen C.M."/>
        </authorList>
    </citation>
    <scope>PHOSPHORYLATION AT SER-248</scope>
</reference>
<reference evidence="18 19 20 21 22 23 24" key="9">
    <citation type="journal article" date="2022" name="Nat. Struct. Mol. Biol.">
        <title>Architecture of the human erythrocyte ankyrin-1 complex.</title>
        <authorList>
            <person name="Vallese F."/>
            <person name="Kim K."/>
            <person name="Yen L.Y."/>
            <person name="Johnston J.D."/>
            <person name="Noble A.J."/>
            <person name="Cali T."/>
            <person name="Clarke O.B."/>
        </authorList>
    </citation>
    <scope>STRUCTURE BY ELECTRON MICROSCOPY (2.20 ANGSTROMS)</scope>
    <scope>FUNCTION</scope>
    <scope>SUBUNIT</scope>
    <scope>ANKYRIN-1 COMPLEX IDENTIFICATION</scope>
    <scope>INTERACTION WITH SLC4A1; AQP1 AND ANK1</scope>
</reference>
<reference key="10">
    <citation type="journal article" date="1992" name="Blood">
        <title>An alanine-to-threonine substitution in protein 4.2 cDNA is associated with a Japanese form of hereditary hemolytic anemia (protein 4.2 Nippon).</title>
        <authorList>
            <person name="Bouhassira E.E."/>
            <person name="Schwartz R.S."/>
            <person name="Yawata Y."/>
            <person name="Ata K."/>
            <person name="Kanzaki A."/>
            <person name="Qiu J.J.-H."/>
            <person name="Nagel R.L."/>
            <person name="Rybicki A.C."/>
        </authorList>
    </citation>
    <scope>VARIANT SPH5 THR-112</scope>
</reference>
<reference key="11">
    <citation type="journal article" date="1994" name="Br. J. Haematol.">
        <title>A novel mutation in the erythrocyte protein 4.2 gene of Japanese patients with hereditary spherocytosis (protein 4.2 Fukuoka).</title>
        <authorList>
            <person name="Takaoka Y."/>
            <person name="Ideguchi H."/>
            <person name="Matsuda M."/>
            <person name="Sakamoto N."/>
            <person name="Takeuchi T."/>
            <person name="Fukumaki Y."/>
        </authorList>
    </citation>
    <scope>VARIANT SPH5 THR-112</scope>
</reference>
<reference key="12">
    <citation type="journal article" date="1995" name="Br. J. Haematol.">
        <title>A point mutation in the protein 4.2 gene (allele 4.2 Tozeur) associated with hereditary haemolytic anaemia.</title>
        <authorList>
            <person name="Hayette S."/>
            <person name="Morle L."/>
            <person name="Bozon M."/>
            <person name="Ghanem A."/>
            <person name="Risinger M."/>
            <person name="Korsgren C."/>
            <person name="Tanner M.J.A."/>
            <person name="Fattoum S."/>
            <person name="Cohen C.M."/>
            <person name="Delaunay J."/>
        </authorList>
    </citation>
    <scope>VARIANT SPH5 GLN-280</scope>
</reference>
<reference key="13">
    <citation type="journal article" date="1995" name="Br. J. Haematol.">
        <title>Band 4.2 Shiga: 317 CGC--&gt;TGC in compound heterozygotes with 142 GCT--&gt;ACT results in band 4.2 deficiency and microspherocytosis.</title>
        <authorList>
            <person name="Kanzaki A."/>
            <person name="Yasunaga M."/>
            <person name="Okamoto N."/>
            <person name="Inoue T."/>
            <person name="Yawata A."/>
            <person name="Wada H."/>
            <person name="Andoh A."/>
            <person name="Hodohara K."/>
            <person name="Fujiyama Y."/>
            <person name="Bamba T."/>
            <person name="Harano T."/>
            <person name="Harano K."/>
            <person name="Yawata Y."/>
        </authorList>
    </citation>
    <scope>VARIANTS SPH5 THR-112 AND CYS-287</scope>
</reference>
<reference key="14">
    <citation type="journal article" date="1995" name="Int. J. Hematol.">
        <title>Band 4.2 Komatsu: 523 GAT--&gt;TAT (175 Asp--&gt;Tyr) in exon 4 of the band 4.2 gene associated with total deficiency of band 4.2, hemolytic anemia with ovalostomatocytosis and marked disruption of the cytoskeletal network.</title>
        <authorList>
            <person name="Kanzaki A."/>
            <person name="Yawata Y."/>
            <person name="Yawata A."/>
            <person name="Inoue T."/>
            <person name="Okamoto N."/>
            <person name="Wada H."/>
            <person name="Harano T."/>
            <person name="Harano K."/>
            <person name="Wilmotte R."/>
            <person name="Hayette S."/>
            <person name="Nakamura Y."/>
            <person name="Niki T."/>
            <person name="Kawamura Y."/>
            <person name="Nakamura S."/>
            <person name="Matsuda T."/>
        </authorList>
    </citation>
    <scope>VARIANT SPH5 TYR-145</scope>
</reference>
<reference key="15">
    <citation type="journal article" date="1999" name="Haematologica">
        <title>4.2 Nippon mutation in a non-Japanese patient with hereditary spherocytosis.</title>
        <authorList>
            <person name="Perrotta S."/>
            <person name="Iolascon A."/>
            <person name="Polito R."/>
            <person name="d'Urzo G."/>
            <person name="Conte M.L."/>
            <person name="Miraglia del Giudice E."/>
        </authorList>
    </citation>
    <scope>VARIANT SPH5 THR-112</scope>
</reference>
<organism>
    <name type="scientific">Homo sapiens</name>
    <name type="common">Human</name>
    <dbReference type="NCBI Taxonomy" id="9606"/>
    <lineage>
        <taxon>Eukaryota</taxon>
        <taxon>Metazoa</taxon>
        <taxon>Chordata</taxon>
        <taxon>Craniata</taxon>
        <taxon>Vertebrata</taxon>
        <taxon>Euteleostomi</taxon>
        <taxon>Mammalia</taxon>
        <taxon>Eutheria</taxon>
        <taxon>Euarchontoglires</taxon>
        <taxon>Primates</taxon>
        <taxon>Haplorrhini</taxon>
        <taxon>Catarrhini</taxon>
        <taxon>Hominidae</taxon>
        <taxon>Homo</taxon>
    </lineage>
</organism>